<evidence type="ECO:0000250" key="1"/>
<evidence type="ECO:0000250" key="2">
    <source>
        <dbReference type="UniProtKB" id="Q62888"/>
    </source>
</evidence>
<evidence type="ECO:0000250" key="3">
    <source>
        <dbReference type="UniProtKB" id="Q8NFZ4"/>
    </source>
</evidence>
<evidence type="ECO:0000255" key="4"/>
<evidence type="ECO:0000256" key="5">
    <source>
        <dbReference type="SAM" id="MobiDB-lite"/>
    </source>
</evidence>
<evidence type="ECO:0000269" key="6">
    <source>
    </source>
</evidence>
<evidence type="ECO:0000269" key="7">
    <source>
    </source>
</evidence>
<evidence type="ECO:0000269" key="8">
    <source>
    </source>
</evidence>
<evidence type="ECO:0000269" key="9">
    <source>
    </source>
</evidence>
<evidence type="ECO:0000269" key="10">
    <source>
    </source>
</evidence>
<evidence type="ECO:0000269" key="11">
    <source>
    </source>
</evidence>
<evidence type="ECO:0000269" key="12">
    <source>
    </source>
</evidence>
<evidence type="ECO:0000269" key="13">
    <source>
    </source>
</evidence>
<evidence type="ECO:0000269" key="14">
    <source>
    </source>
</evidence>
<evidence type="ECO:0000269" key="15">
    <source>
    </source>
</evidence>
<evidence type="ECO:0000269" key="16">
    <source>
    </source>
</evidence>
<evidence type="ECO:0000269" key="17">
    <source>
    </source>
</evidence>
<evidence type="ECO:0000269" key="18">
    <source>
    </source>
</evidence>
<evidence type="ECO:0000269" key="19">
    <source>
    </source>
</evidence>
<evidence type="ECO:0000269" key="20">
    <source>
    </source>
</evidence>
<evidence type="ECO:0000269" key="21">
    <source>
    </source>
</evidence>
<evidence type="ECO:0000305" key="22"/>
<evidence type="ECO:0007744" key="23">
    <source>
    </source>
</evidence>
<evidence type="ECO:0007829" key="24">
    <source>
        <dbReference type="PDB" id="3BL8"/>
    </source>
</evidence>
<proteinExistence type="evidence at protein level"/>
<protein>
    <recommendedName>
        <fullName>Neuroligin-2</fullName>
    </recommendedName>
</protein>
<reference key="1">
    <citation type="journal article" date="2004" name="DNA Res.">
        <title>Prediction of the coding sequences of mouse homologues of KIAA gene: IV. The complete nucleotide sequences of 500 mouse KIAA-homologous cDNAs identified by screening of terminal sequences of cDNA clones randomly sampled from size-fractionated libraries.</title>
        <authorList>
            <person name="Okazaki N."/>
            <person name="Kikuno R."/>
            <person name="Ohara R."/>
            <person name="Inamoto S."/>
            <person name="Koseki H."/>
            <person name="Hiraoka S."/>
            <person name="Saga Y."/>
            <person name="Seino S."/>
            <person name="Nishimura M."/>
            <person name="Kaisho T."/>
            <person name="Hoshino K."/>
            <person name="Kitamura H."/>
            <person name="Nagase T."/>
            <person name="Ohara O."/>
            <person name="Koga H."/>
        </authorList>
    </citation>
    <scope>NUCLEOTIDE SEQUENCE [LARGE SCALE MRNA]</scope>
    <source>
        <tissue>Embryonic tail</tissue>
    </source>
</reference>
<reference key="2">
    <citation type="journal article" date="2009" name="PLoS Biol.">
        <title>Lineage-specific biology revealed by a finished genome assembly of the mouse.</title>
        <authorList>
            <person name="Church D.M."/>
            <person name="Goodstadt L."/>
            <person name="Hillier L.W."/>
            <person name="Zody M.C."/>
            <person name="Goldstein S."/>
            <person name="She X."/>
            <person name="Bult C.J."/>
            <person name="Agarwala R."/>
            <person name="Cherry J.L."/>
            <person name="DiCuccio M."/>
            <person name="Hlavina W."/>
            <person name="Kapustin Y."/>
            <person name="Meric P."/>
            <person name="Maglott D."/>
            <person name="Birtle Z."/>
            <person name="Marques A.C."/>
            <person name="Graves T."/>
            <person name="Zhou S."/>
            <person name="Teague B."/>
            <person name="Potamousis K."/>
            <person name="Churas C."/>
            <person name="Place M."/>
            <person name="Herschleb J."/>
            <person name="Runnheim R."/>
            <person name="Forrest D."/>
            <person name="Amos-Landgraf J."/>
            <person name="Schwartz D.C."/>
            <person name="Cheng Z."/>
            <person name="Lindblad-Toh K."/>
            <person name="Eichler E.E."/>
            <person name="Ponting C.P."/>
        </authorList>
    </citation>
    <scope>NUCLEOTIDE SEQUENCE [LARGE SCALE GENOMIC DNA]</scope>
    <source>
        <strain>C57BL/6J</strain>
    </source>
</reference>
<reference key="3">
    <citation type="journal article" date="2000" name="Cell">
        <title>Neuroligin expressed in nonneuronal cells triggers presynaptic development in contacting axons.</title>
        <authorList>
            <person name="Scheiffele P."/>
            <person name="Fan J."/>
            <person name="Choih J."/>
            <person name="Fetter R."/>
            <person name="Serafini T."/>
        </authorList>
    </citation>
    <scope>FUNCTION</scope>
</reference>
<reference key="4">
    <citation type="journal article" date="2004" name="Cell">
        <title>Neurexins induce differentiation of GABA and glutamate postsynaptic specializations via neuroligins.</title>
        <authorList>
            <person name="Graf E.R."/>
            <person name="Zhang X."/>
            <person name="Jin S.X."/>
            <person name="Linhoff M.W."/>
            <person name="Craig A.M."/>
        </authorList>
    </citation>
    <scope>FUNCTION</scope>
    <scope>SUBCELLULAR LOCATION</scope>
</reference>
<reference key="5">
    <citation type="journal article" date="2006" name="Neuron">
        <title>Neuroligins determine synapse maturation and function.</title>
        <authorList>
            <person name="Varoqueaux F."/>
            <person name="Aramuni G."/>
            <person name="Rawson R.L."/>
            <person name="Mohrmann R."/>
            <person name="Missler M."/>
            <person name="Gottmann K."/>
            <person name="Zhang W."/>
            <person name="Sudhof T.C."/>
            <person name="Brose N."/>
        </authorList>
    </citation>
    <scope>DISRUPTION PHENOTYPE</scope>
    <scope>FUNCTION</scope>
    <scope>TISSUE SPECIFICITY</scope>
</reference>
<reference key="6">
    <citation type="journal article" date="2007" name="Eur. J. Neurosci.">
        <title>Neuroligin-3 is a neuronal adhesion protein at GABAergic and glutamatergic synapses.</title>
        <authorList>
            <person name="Budreck E.C."/>
            <person name="Scheiffele P."/>
        </authorList>
    </citation>
    <scope>INTERACTION WITH NLGN3</scope>
</reference>
<reference key="7">
    <citation type="journal article" date="2008" name="Proc. Natl. Acad. Sci. U.S.A.">
        <title>Unusually rapid evolution of neuroligin-4 in mice.</title>
        <authorList>
            <person name="Bolliger M.F."/>
            <person name="Pei J."/>
            <person name="Maxeiner S."/>
            <person name="Boucard A.A."/>
            <person name="Grishin N.V."/>
            <person name="Sudhof T.C."/>
        </authorList>
    </citation>
    <scope>TISSUE SPECIFICITY</scope>
</reference>
<reference key="8">
    <citation type="journal article" date="2009" name="J. Neurosci.">
        <title>Neuroligin 2 controls the maturation of GABAergic synapses and information processing in the retina.</title>
        <authorList>
            <person name="Hoon M."/>
            <person name="Bauer G."/>
            <person name="Fritschy J.M."/>
            <person name="Moser T."/>
            <person name="Falkenburger B.H."/>
            <person name="Varoqueaux F."/>
        </authorList>
    </citation>
    <scope>DISRUPTION PHENOTYPE</scope>
    <scope>SUBCELLULAR LOCATION</scope>
    <scope>FUNCTION</scope>
</reference>
<reference key="9">
    <citation type="journal article" date="2009" name="J. Neurosci.">
        <title>Neuroligin-2 deletion selectively decreases inhibitory synaptic transmission originating from fast-spiking but not from somatostatin-positive interneurons.</title>
        <authorList>
            <person name="Gibson J.R."/>
            <person name="Huber K.M."/>
            <person name="Sudhof T.C."/>
        </authorList>
    </citation>
    <scope>DISRUPTION PHENOTYPE</scope>
    <scope>FUNCTION</scope>
</reference>
<reference key="10">
    <citation type="journal article" date="2009" name="Neuron">
        <title>Neuroligin 2 drives postsynaptic assembly at perisomatic inhibitory synapses through gephyrin and collybistin.</title>
        <authorList>
            <person name="Poulopoulos A."/>
            <person name="Aramuni G."/>
            <person name="Meyer G."/>
            <person name="Soykan T."/>
            <person name="Hoon M."/>
            <person name="Papadopoulos T."/>
            <person name="Zhang M."/>
            <person name="Paarmann I."/>
            <person name="Fuchs C."/>
            <person name="Harvey K."/>
            <person name="Jedlicka P."/>
            <person name="Schwarzacher S.W."/>
            <person name="Betz H."/>
            <person name="Harvey R.J."/>
            <person name="Brose N."/>
            <person name="Zhang W."/>
            <person name="Varoqueaux F."/>
        </authorList>
    </citation>
    <scope>INTERACTION WITH GPHN</scope>
    <scope>SUBCELLULAR LOCATION</scope>
    <scope>TISSUE SPECIFICITY</scope>
</reference>
<reference key="11">
    <citation type="journal article" date="2009" name="Proc. Natl. Acad. Sci. U.S.A.">
        <title>The synaptic proteins neurexins and neuroligins are widely expressed in the vascular system and contribute to its functions.</title>
        <authorList>
            <person name="Bottos A."/>
            <person name="Destro E."/>
            <person name="Rissone A."/>
            <person name="Graziano S."/>
            <person name="Cordara G."/>
            <person name="Assenzio B."/>
            <person name="Cera M.R."/>
            <person name="Mascia L."/>
            <person name="Bussolino F."/>
            <person name="Arese M."/>
        </authorList>
    </citation>
    <scope>TISSUE SPECIFICITY</scope>
</reference>
<reference key="12">
    <citation type="journal article" date="2010" name="Cell">
        <title>A tissue-specific atlas of mouse protein phosphorylation and expression.</title>
        <authorList>
            <person name="Huttlin E.L."/>
            <person name="Jedrychowski M.P."/>
            <person name="Elias J.E."/>
            <person name="Goswami T."/>
            <person name="Rad R."/>
            <person name="Beausoleil S.A."/>
            <person name="Villen J."/>
            <person name="Haas W."/>
            <person name="Sowa M.E."/>
            <person name="Gygi S.P."/>
        </authorList>
    </citation>
    <scope>PHOSPHORYLATION [LARGE SCALE ANALYSIS] AT SER-714 AND SER-719</scope>
    <scope>IDENTIFICATION BY MASS SPECTROMETRY [LARGE SCALE ANALYSIS]</scope>
    <source>
        <tissue>Brain</tissue>
    </source>
</reference>
<reference key="13">
    <citation type="journal article" date="2010" name="J. Neurosci. Res.">
        <title>Synaptic localization of neuroligin 2 in the rodent retina: comparative study with the dystroglycan-containing complex.</title>
        <authorList>
            <person name="Lui L."/>
            <person name="Levinson J.N."/>
            <person name="Noel G."/>
            <person name="Handrigan G.R."/>
            <person name="Richman J.M."/>
            <person name="El-Husseini A."/>
            <person name="Moukhles H."/>
        </authorList>
    </citation>
    <scope>SUBCELLULAR LOCATION</scope>
    <scope>TISSUE SPECIFICITY</scope>
</reference>
<reference key="14">
    <citation type="journal article" date="2011" name="Cereb. Cortex">
        <title>Increased dentate gyrus excitability in neuroligin-2-deficient mice in vivo.</title>
        <authorList>
            <person name="Jedlicka P."/>
            <person name="Hoon M."/>
            <person name="Papadopoulos T."/>
            <person name="Vlachos A."/>
            <person name="Winkels R."/>
            <person name="Poulopoulos A."/>
            <person name="Betz H."/>
            <person name="Deller T."/>
            <person name="Brose N."/>
            <person name="Varoqueaux F."/>
            <person name="Schwarzacher S.W."/>
        </authorList>
    </citation>
    <scope>DISRUPTION PHENOTYPE</scope>
    <scope>FUNCTION</scope>
</reference>
<reference key="15">
    <citation type="journal article" date="2013" name="J. Cell Biol.">
        <title>Interaction between autism-linked MDGAs and neuroligins suppresses inhibitory synapse development.</title>
        <authorList>
            <person name="Pettem K.L."/>
            <person name="Yokomaku D."/>
            <person name="Takahashi H."/>
            <person name="Ge Y."/>
            <person name="Craig A.M."/>
        </authorList>
    </citation>
    <scope>INTERACTION WITH MDGA1</scope>
</reference>
<reference key="16">
    <citation type="journal article" date="2013" name="J. Cell Biol.">
        <title>The adhesion protein IgSF9b is coupled to neuroligin 2 via S-SCAM to promote inhibitory synapse development.</title>
        <authorList>
            <person name="Woo J."/>
            <person name="Kwon S.K."/>
            <person name="Nam J."/>
            <person name="Choi S."/>
            <person name="Takahashi H."/>
            <person name="Krueger D."/>
            <person name="Park J."/>
            <person name="Lee Y."/>
            <person name="Bae J.Y."/>
            <person name="Lee D."/>
            <person name="Ko J."/>
            <person name="Kim H."/>
            <person name="Kim M.H."/>
            <person name="Bae Y.C."/>
            <person name="Chang S."/>
            <person name="Craig A.M."/>
            <person name="Kim E."/>
        </authorList>
    </citation>
    <scope>IDENTIFICATION IN A COMPLEX WITH MAGI2 AND IGSF9B</scope>
</reference>
<reference key="17">
    <citation type="journal article" date="2017" name="Neuron">
        <title>GARLH family proteins stabilize GABAA receptors at synapses.</title>
        <authorList>
            <person name="Yamasaki T."/>
            <person name="Hoyos-Ramirez E."/>
            <person name="Martenson J.S."/>
            <person name="Morimoto-Tomita M."/>
            <person name="Tomita S."/>
        </authorList>
    </citation>
    <scope>INTERACTION WITH LHFPL4</scope>
</reference>
<reference key="18">
    <citation type="journal article" date="2018" name="Cell Rep.">
        <title>Impairment of inhibitory synapse formation and motor behavior in mice lacking the NL2 binding partner LHFPL4/GARLH4.</title>
        <authorList>
            <person name="Wu M."/>
            <person name="Tian H.L."/>
            <person name="Liu X."/>
            <person name="Lai J.H.C."/>
            <person name="Du S."/>
            <person name="Xia J."/>
        </authorList>
    </citation>
    <scope>INTERACTION WITH LHFPL4</scope>
    <scope>FUNCTION</scope>
    <scope>IDENTIFICATION BY MASS SPECTROMETRY</scope>
    <scope>SUBCELLULAR LOCATION</scope>
    <scope>TISSUE SPECIFICITY</scope>
</reference>
<reference key="19">
    <citation type="journal article" date="2018" name="Cell">
        <title>Heparan Sulfate Organizes Neuronal Synapses through Neurexin Partnerships.</title>
        <authorList>
            <person name="Zhang P."/>
            <person name="Lu H."/>
            <person name="Peixoto R.T."/>
            <person name="Pines M.K."/>
            <person name="Ge Y."/>
            <person name="Oku S."/>
            <person name="Siddiqui T.J."/>
            <person name="Xie Y."/>
            <person name="Wu W."/>
            <person name="Archer-Hartmann S."/>
            <person name="Yoshida K."/>
            <person name="Tanaka K.F."/>
            <person name="Aricescu A.R."/>
            <person name="Azadi P."/>
            <person name="Gordon M.D."/>
            <person name="Sabatini B.L."/>
            <person name="Wong R.O.L."/>
            <person name="Craig A.M."/>
        </authorList>
    </citation>
    <scope>FUNCTION</scope>
    <scope>INTERACTION WITH NEUREXINS</scope>
    <scope>MUTAGENESIS OF 586-LYS--ARG-590</scope>
</reference>
<reference key="20">
    <citation type="journal article" date="2008" name="Proc. Natl. Acad. Sci. U.S.A.">
        <title>Crystal structure of the extracellular cholinesterase-like domain from neuroligin-2.</title>
        <authorList>
            <person name="Koehnke J."/>
            <person name="Jin X."/>
            <person name="Budreck E.C."/>
            <person name="Posy S."/>
            <person name="Scheiffele P."/>
            <person name="Honig B."/>
            <person name="Shapiro L."/>
        </authorList>
    </citation>
    <scope>X-RAY CRYSTALLOGRAPHY (3.3 ANGSTROMS) OF 42-612</scope>
    <scope>DISULFIDE BONDS</scope>
    <scope>GLYCOSYLATION AT ASN-98</scope>
</reference>
<sequence>MWLLALCLVGLAGAQRGGGGPGGGAPGGPGLGLGSLGEERFPVVNTAYGRVRGVRRELNNEILGPVVQFLGVPYATPPLGARRFQPPEAPASWPGVRNATTLPPACPQNLHGALPAIMLPVWFTDNLEAAATYVQNQSEDCLYLNLYVPTEDGPLTKKRDEATLNPPDTDIRDSGKKPVMLFLHGGSYMEGTGNMFDGSVLAAYGNVIVVTLNYRLGVLGFLSTGDQAAKGNYGLLDQIQALRWLSENIAHFGGDPERITIFGSGAGASCVNLLILSHHSEGLFQKAIAQSGTAISSWSVNYQPLKYTRLLAAKVGCDREDSTEAVECLRRKSSRELVDQDVQPARYHIAFGPVVDGDVVPDDPEILMQQGEFLNYDMLIGVNQGEGLKFVEDSAESEDGVSASAFDFTVSNFVDNLYGYPEGKDVLRETIKFMYTDWADRDNGEMRRKTLLALFTDHQWVAPAVATAKLHADYQSPVYFYTFYHHCQAEGRPEWADAAHGDELPYVFGVPMVGATDLFPCNFSKNDVMLSAVVMTYWTNFAKTGDPNQPVPQDTKFIHTKPNRFEEVVWSKFNSKEKQYLHIGLKPRVRDNYRANKVAFWLELVPHLHNLHTELFTTTTRLPPYATRWPPRTPGPGTSGTRRPPPPATLPPESDIDLGPRAYDRFPGDSRDYSTELSVTVAVGASLLFLNILAFAALYYKRDRRQELRCRRLSPPGGSGSGVPGGGPLLPTAGRELPPEEELVSLQLKRGGGVGADPAEALRPACPPDYTLALRRAPDDVPLLAPGALTLLPSGLGPPPPPPPPSLHPFGPFPPPPPTATSHNNTLPHPHSTTRV</sequence>
<comment type="function">
    <text evidence="1 6 7 8 12 15 17 20 21">Transmembrane scaffolding protein involved in cell-cell interactions via its interactions with neurexin family members. Mediates cell-cell interactions both in neurons and in other types of cells, such as Langerhans beta cells. Mediates cell-cell interactions between Langerhans beta cells and modulates insulin secretion (By similarity). Plays a role in synapse function and synaptic signal transmission, especially via gamma-aminobutyric acid receptors (GABA(A) receptors). Functions by recruiting and clustering synaptic proteins. Promotes clustering of postsynaptic GABRG2 and GPHN. Promotes clustering of postsynaptic LHFPL4 (PubMed:29742426). Modulates signaling by inhibitory synapses, and thereby plays a role in controlling the ratio of signaling by excitatory and inhibitory synapses and information processing. Required for normal signal amplitude from inhibitory synapses, but is not essential for normal signal frequency. May promote the initial formation of synapses, but is not essential for this. In vitro, triggers the de novo formation of presynaptic structures.</text>
</comment>
<comment type="subunit">
    <text evidence="2 3 9 13 18 19 20 21">Interacts with neurexins NRXN1, NRXN2 and NRXN3 (By similarity). Interaction with neurexins is mediated by heparan sulfate glycan modification on neurexin (PubMed:30100184). Interacts (via its C-terminus) with DLG4/PSD-95 (via PDZ domain 3). Interacts with PATJ (By similarity). Interacts with MDGA2 (By similarity). Interacts with GPHN (PubMed:19755106). Interacts with MDGA1 (PubMed:23358245). Found in a complex with MAGI2 and IGSF9B, where it interacts with MAGI2 (via WW 1, WW 2 and PDZ 2 domains) (PubMed:23751499). Identified in a complex of 720 kDa composed of LHFPL4, NLGN2, GABRA1, GABRB2, GABRG2 and GABRB3 (By similarity). Interacts with LHFPL4; leading to mutual regulation of the protein level and synaptic clustering (PubMed:28279354, PubMed:29742426). Interacts with GABRA1 (By similarity).</text>
</comment>
<comment type="interaction">
    <interactant intactId="EBI-775065">
        <id>Q69ZK9</id>
    </interactant>
    <interactant intactId="EBI-775065">
        <id>Q69ZK9</id>
        <label>Nlgn2</label>
    </interactant>
    <organismsDiffer>false</organismsDiffer>
    <experiments>2</experiments>
</comment>
<comment type="interaction">
    <interactant intactId="EBI-775065">
        <id>Q69ZK9</id>
    </interactant>
    <interactant intactId="EBI-728180">
        <id>O14522</id>
        <label>PTPRT</label>
    </interactant>
    <organismsDiffer>true</organismsDiffer>
    <experiments>2</experiments>
</comment>
<comment type="subcellular location">
    <subcellularLocation>
        <location>Cell membrane</location>
        <topology>Single-pass type I membrane protein</topology>
    </subcellularLocation>
    <subcellularLocation>
        <location evidence="20">Postsynaptic cell membrane</location>
    </subcellularLocation>
    <subcellularLocation>
        <location>Presynaptic cell membrane</location>
    </subcellularLocation>
    <text evidence="1">Detected at postsynaptic membranes in brain. Detected at dendritic spines in cultured neurons. Colocalizes with GPHN and ARHGEF9 at neuronal cell membranes (By similarity). Localized at presynaptic membranes in retina. Colocalizes with GABRG2 at inhibitory synapses in the retina.</text>
</comment>
<comment type="tissue specificity">
    <text evidence="8 11 13 14 16">Brain and arteries. Detected in the retina outer plexiform layer (at protein level). Widely expressed. Detected in heart, brain, spleen, lung, liver, skeletal muscle, kidney and testis.</text>
</comment>
<comment type="disruption phenotype">
    <text evidence="8 12 15 17">No obvious phenotype, but mice present subtle behavorial changes. Signaling from inhibitory synapses is impaired. In addition, mice have reduced brain volume. Mice lacking both NLGN1 and NLGN2, or NLGN2 and NLGN3, are viable, but have impaired breathing, drastically reduced reproduction rates and striking deficits in raising their offspring. Mice lacking NLGN1, NLGN2 and NLGN3 are born at the expected Mendelian rate, but die shortly after birth due to respiratory failure. They do not show a significant change in the number of synapses, but synapse function is strongly impaired.</text>
</comment>
<comment type="similarity">
    <text evidence="22">Belongs to the type-B carboxylesterase/lipase family.</text>
</comment>
<comment type="sequence caution" evidence="22">
    <conflict type="erroneous initiation">
        <sequence resource="EMBL-CDS" id="BAD32437"/>
    </conflict>
</comment>
<keyword id="KW-0002">3D-structure</keyword>
<keyword id="KW-0130">Cell adhesion</keyword>
<keyword id="KW-1003">Cell membrane</keyword>
<keyword id="KW-0966">Cell projection</keyword>
<keyword id="KW-1015">Disulfide bond</keyword>
<keyword id="KW-0325">Glycoprotein</keyword>
<keyword id="KW-0472">Membrane</keyword>
<keyword id="KW-0597">Phosphoprotein</keyword>
<keyword id="KW-0628">Postsynaptic cell membrane</keyword>
<keyword id="KW-1185">Reference proteome</keyword>
<keyword id="KW-0732">Signal</keyword>
<keyword id="KW-0770">Synapse</keyword>
<keyword id="KW-0812">Transmembrane</keyword>
<keyword id="KW-1133">Transmembrane helix</keyword>
<organism>
    <name type="scientific">Mus musculus</name>
    <name type="common">Mouse</name>
    <dbReference type="NCBI Taxonomy" id="10090"/>
    <lineage>
        <taxon>Eukaryota</taxon>
        <taxon>Metazoa</taxon>
        <taxon>Chordata</taxon>
        <taxon>Craniata</taxon>
        <taxon>Vertebrata</taxon>
        <taxon>Euteleostomi</taxon>
        <taxon>Mammalia</taxon>
        <taxon>Eutheria</taxon>
        <taxon>Euarchontoglires</taxon>
        <taxon>Glires</taxon>
        <taxon>Rodentia</taxon>
        <taxon>Myomorpha</taxon>
        <taxon>Muroidea</taxon>
        <taxon>Muridae</taxon>
        <taxon>Murinae</taxon>
        <taxon>Mus</taxon>
        <taxon>Mus</taxon>
    </lineage>
</organism>
<accession>Q69ZK9</accession>
<accession>Q5F288</accession>
<name>NLGN2_MOUSE</name>
<dbReference type="EMBL" id="AK173159">
    <property type="protein sequence ID" value="BAD32437.1"/>
    <property type="status" value="ALT_INIT"/>
    <property type="molecule type" value="mRNA"/>
</dbReference>
<dbReference type="EMBL" id="AL603707">
    <property type="status" value="NOT_ANNOTATED_CDS"/>
    <property type="molecule type" value="Genomic_DNA"/>
</dbReference>
<dbReference type="CCDS" id="CCDS24914.1"/>
<dbReference type="RefSeq" id="NP_001351066.1">
    <property type="nucleotide sequence ID" value="NM_001364137.1"/>
</dbReference>
<dbReference type="RefSeq" id="NP_942562.2">
    <property type="nucleotide sequence ID" value="NM_198862.2"/>
</dbReference>
<dbReference type="RefSeq" id="XP_006532964.1">
    <property type="nucleotide sequence ID" value="XM_006532901.2"/>
</dbReference>
<dbReference type="PDB" id="3BL8">
    <property type="method" value="X-ray"/>
    <property type="resolution" value="3.30 A"/>
    <property type="chains" value="A/B/C/D=42-612"/>
</dbReference>
<dbReference type="PDBsum" id="3BL8"/>
<dbReference type="SMR" id="Q69ZK9"/>
<dbReference type="BioGRID" id="229806">
    <property type="interactions" value="6"/>
</dbReference>
<dbReference type="CORUM" id="Q69ZK9"/>
<dbReference type="DIP" id="DIP-29702N"/>
<dbReference type="FunCoup" id="Q69ZK9">
    <property type="interactions" value="713"/>
</dbReference>
<dbReference type="IntAct" id="Q69ZK9">
    <property type="interactions" value="4"/>
</dbReference>
<dbReference type="MINT" id="Q69ZK9"/>
<dbReference type="STRING" id="10090.ENSMUSP00000104274"/>
<dbReference type="ESTHER" id="mouse-2neur">
    <property type="family name" value="Neuroligin"/>
</dbReference>
<dbReference type="GlyCosmos" id="Q69ZK9">
    <property type="glycosylation" value="3 sites, No reported glycans"/>
</dbReference>
<dbReference type="GlyGen" id="Q69ZK9">
    <property type="glycosylation" value="6 sites, 1 O-linked glycan (1 site)"/>
</dbReference>
<dbReference type="iPTMnet" id="Q69ZK9"/>
<dbReference type="PhosphoSitePlus" id="Q69ZK9"/>
<dbReference type="SwissPalm" id="Q69ZK9"/>
<dbReference type="PaxDb" id="10090-ENSMUSP00000053097"/>
<dbReference type="PeptideAtlas" id="Q69ZK9"/>
<dbReference type="ProteomicsDB" id="293856"/>
<dbReference type="Pumba" id="Q69ZK9"/>
<dbReference type="ABCD" id="Q69ZK9">
    <property type="antibodies" value="1 sequenced antibody"/>
</dbReference>
<dbReference type="Antibodypedia" id="24107">
    <property type="antibodies" value="108 antibodies from 31 providers"/>
</dbReference>
<dbReference type="DNASU" id="216856"/>
<dbReference type="Ensembl" id="ENSMUST00000056484.10">
    <property type="protein sequence ID" value="ENSMUSP00000053097.4"/>
    <property type="gene ID" value="ENSMUSG00000051790.16"/>
</dbReference>
<dbReference type="Ensembl" id="ENSMUST00000108634.9">
    <property type="protein sequence ID" value="ENSMUSP00000104274.3"/>
    <property type="gene ID" value="ENSMUSG00000051790.16"/>
</dbReference>
<dbReference type="GeneID" id="216856"/>
<dbReference type="KEGG" id="mmu:216856"/>
<dbReference type="UCSC" id="uc007jrw.1">
    <property type="organism name" value="mouse"/>
</dbReference>
<dbReference type="AGR" id="MGI:2681835"/>
<dbReference type="CTD" id="57555"/>
<dbReference type="MGI" id="MGI:2681835">
    <property type="gene designation" value="Nlgn2"/>
</dbReference>
<dbReference type="VEuPathDB" id="HostDB:ENSMUSG00000051790"/>
<dbReference type="eggNOG" id="KOG1516">
    <property type="taxonomic scope" value="Eukaryota"/>
</dbReference>
<dbReference type="GeneTree" id="ENSGT00940000160598"/>
<dbReference type="HOGENOM" id="CLU_006586_5_1_1"/>
<dbReference type="InParanoid" id="Q69ZK9"/>
<dbReference type="OMA" id="YETGTQQ"/>
<dbReference type="OrthoDB" id="408631at2759"/>
<dbReference type="PhylomeDB" id="Q69ZK9"/>
<dbReference type="TreeFam" id="TF326187"/>
<dbReference type="Reactome" id="R-MMU-6794361">
    <property type="pathway name" value="Neurexins and neuroligins"/>
</dbReference>
<dbReference type="BioGRID-ORCS" id="216856">
    <property type="hits" value="0 hits in 78 CRISPR screens"/>
</dbReference>
<dbReference type="CD-CODE" id="CE726F99">
    <property type="entry name" value="Postsynaptic density"/>
</dbReference>
<dbReference type="ChiTaRS" id="Nlgn2">
    <property type="organism name" value="mouse"/>
</dbReference>
<dbReference type="EvolutionaryTrace" id="Q69ZK9"/>
<dbReference type="PRO" id="PR:Q69ZK9"/>
<dbReference type="Proteomes" id="UP000000589">
    <property type="component" value="Chromosome 11"/>
</dbReference>
<dbReference type="RNAct" id="Q69ZK9">
    <property type="molecule type" value="protein"/>
</dbReference>
<dbReference type="Bgee" id="ENSMUSG00000051790">
    <property type="expression patterns" value="Expressed in subiculum and 220 other cell types or tissues"/>
</dbReference>
<dbReference type="ExpressionAtlas" id="Q69ZK9">
    <property type="expression patterns" value="baseline and differential"/>
</dbReference>
<dbReference type="GO" id="GO:0030424">
    <property type="term" value="C:axon"/>
    <property type="evidence" value="ECO:0000314"/>
    <property type="project" value="MGI"/>
</dbReference>
<dbReference type="GO" id="GO:0009986">
    <property type="term" value="C:cell surface"/>
    <property type="evidence" value="ECO:0000314"/>
    <property type="project" value="MGI"/>
</dbReference>
<dbReference type="GO" id="GO:0030425">
    <property type="term" value="C:dendrite"/>
    <property type="evidence" value="ECO:0000314"/>
    <property type="project" value="MGI"/>
</dbReference>
<dbReference type="GO" id="GO:0043198">
    <property type="term" value="C:dendritic shaft"/>
    <property type="evidence" value="ECO:0007669"/>
    <property type="project" value="Ensembl"/>
</dbReference>
<dbReference type="GO" id="GO:0098691">
    <property type="term" value="C:dopaminergic synapse"/>
    <property type="evidence" value="ECO:0000314"/>
    <property type="project" value="SynGO"/>
</dbReference>
<dbReference type="GO" id="GO:0060076">
    <property type="term" value="C:excitatory synapse"/>
    <property type="evidence" value="ECO:0000305"/>
    <property type="project" value="BHF-UCL"/>
</dbReference>
<dbReference type="GO" id="GO:0098982">
    <property type="term" value="C:GABA-ergic synapse"/>
    <property type="evidence" value="ECO:0000314"/>
    <property type="project" value="SynGO"/>
</dbReference>
<dbReference type="GO" id="GO:0098690">
    <property type="term" value="C:glycinergic synapse"/>
    <property type="evidence" value="ECO:0000314"/>
    <property type="project" value="SynGO"/>
</dbReference>
<dbReference type="GO" id="GO:0060077">
    <property type="term" value="C:inhibitory synapse"/>
    <property type="evidence" value="ECO:0000305"/>
    <property type="project" value="BHF-UCL"/>
</dbReference>
<dbReference type="GO" id="GO:0045211">
    <property type="term" value="C:postsynaptic membrane"/>
    <property type="evidence" value="ECO:0000250"/>
    <property type="project" value="BHF-UCL"/>
</dbReference>
<dbReference type="GO" id="GO:0099634">
    <property type="term" value="C:postsynaptic specialization membrane"/>
    <property type="evidence" value="ECO:0000314"/>
    <property type="project" value="SynGO"/>
</dbReference>
<dbReference type="GO" id="GO:0042734">
    <property type="term" value="C:presynaptic membrane"/>
    <property type="evidence" value="ECO:0007669"/>
    <property type="project" value="UniProtKB-SubCell"/>
</dbReference>
<dbReference type="GO" id="GO:0097470">
    <property type="term" value="C:ribbon synapse"/>
    <property type="evidence" value="ECO:0007669"/>
    <property type="project" value="Ensembl"/>
</dbReference>
<dbReference type="GO" id="GO:0045202">
    <property type="term" value="C:synapse"/>
    <property type="evidence" value="ECO:0000314"/>
    <property type="project" value="MGI"/>
</dbReference>
<dbReference type="GO" id="GO:0050839">
    <property type="term" value="F:cell adhesion molecule binding"/>
    <property type="evidence" value="ECO:0000353"/>
    <property type="project" value="BHF-UCL"/>
</dbReference>
<dbReference type="GO" id="GO:0042802">
    <property type="term" value="F:identical protein binding"/>
    <property type="evidence" value="ECO:0000353"/>
    <property type="project" value="IntAct"/>
</dbReference>
<dbReference type="GO" id="GO:0042043">
    <property type="term" value="F:neurexin family protein binding"/>
    <property type="evidence" value="ECO:0000353"/>
    <property type="project" value="BHF-UCL"/>
</dbReference>
<dbReference type="GO" id="GO:0097116">
    <property type="term" value="P:gephyrin clustering involved in postsynaptic density assembly"/>
    <property type="evidence" value="ECO:0000314"/>
    <property type="project" value="BHF-UCL"/>
</dbReference>
<dbReference type="GO" id="GO:1904862">
    <property type="term" value="P:inhibitory synapse assembly"/>
    <property type="evidence" value="ECO:0000314"/>
    <property type="project" value="ParkinsonsUK-UCL"/>
</dbReference>
<dbReference type="GO" id="GO:1901142">
    <property type="term" value="P:insulin metabolic process"/>
    <property type="evidence" value="ECO:0007669"/>
    <property type="project" value="Ensembl"/>
</dbReference>
<dbReference type="GO" id="GO:0007630">
    <property type="term" value="P:jump response"/>
    <property type="evidence" value="ECO:0000250"/>
    <property type="project" value="BHF-UCL"/>
</dbReference>
<dbReference type="GO" id="GO:0035641">
    <property type="term" value="P:locomotory exploration behavior"/>
    <property type="evidence" value="ECO:0000315"/>
    <property type="project" value="BHF-UCL"/>
</dbReference>
<dbReference type="GO" id="GO:0050804">
    <property type="term" value="P:modulation of chemical synaptic transmission"/>
    <property type="evidence" value="ECO:0000316"/>
    <property type="project" value="MGI"/>
</dbReference>
<dbReference type="GO" id="GO:0050885">
    <property type="term" value="P:neuromuscular process controlling balance"/>
    <property type="evidence" value="ECO:0000315"/>
    <property type="project" value="BHF-UCL"/>
</dbReference>
<dbReference type="GO" id="GO:0007158">
    <property type="term" value="P:neuron cell-cell adhesion"/>
    <property type="evidence" value="ECO:0000250"/>
    <property type="project" value="BHF-UCL"/>
</dbReference>
<dbReference type="GO" id="GO:0072578">
    <property type="term" value="P:neurotransmitter-gated ion channel clustering"/>
    <property type="evidence" value="ECO:0000314"/>
    <property type="project" value="MGI"/>
</dbReference>
<dbReference type="GO" id="GO:0008284">
    <property type="term" value="P:positive regulation of cell population proliferation"/>
    <property type="evidence" value="ECO:0007669"/>
    <property type="project" value="Ensembl"/>
</dbReference>
<dbReference type="GO" id="GO:0060999">
    <property type="term" value="P:positive regulation of dendritic spine development"/>
    <property type="evidence" value="ECO:0007669"/>
    <property type="project" value="Ensembl"/>
</dbReference>
<dbReference type="GO" id="GO:2000463">
    <property type="term" value="P:positive regulation of excitatory postsynaptic potential"/>
    <property type="evidence" value="ECO:0000315"/>
    <property type="project" value="BHF-UCL"/>
</dbReference>
<dbReference type="GO" id="GO:0097151">
    <property type="term" value="P:positive regulation of inhibitory postsynaptic potential"/>
    <property type="evidence" value="ECO:0000315"/>
    <property type="project" value="BHF-UCL"/>
</dbReference>
<dbReference type="GO" id="GO:0032024">
    <property type="term" value="P:positive regulation of insulin secretion"/>
    <property type="evidence" value="ECO:0007669"/>
    <property type="project" value="Ensembl"/>
</dbReference>
<dbReference type="GO" id="GO:1902474">
    <property type="term" value="P:positive regulation of protein localization to synapse"/>
    <property type="evidence" value="ECO:0000266"/>
    <property type="project" value="MGI"/>
</dbReference>
<dbReference type="GO" id="GO:0051965">
    <property type="term" value="P:positive regulation of synapse assembly"/>
    <property type="evidence" value="ECO:0000250"/>
    <property type="project" value="BHF-UCL"/>
</dbReference>
<dbReference type="GO" id="GO:0032230">
    <property type="term" value="P:positive regulation of synaptic transmission, GABAergic"/>
    <property type="evidence" value="ECO:0000315"/>
    <property type="project" value="BHF-UCL"/>
</dbReference>
<dbReference type="GO" id="GO:0051968">
    <property type="term" value="P:positive regulation of synaptic transmission, glutamatergic"/>
    <property type="evidence" value="ECO:0000315"/>
    <property type="project" value="BHF-UCL"/>
</dbReference>
<dbReference type="GO" id="GO:2000809">
    <property type="term" value="P:positive regulation of synaptic vesicle clustering"/>
    <property type="evidence" value="ECO:0000314"/>
    <property type="project" value="BHF-UCL"/>
</dbReference>
<dbReference type="GO" id="GO:1904034">
    <property type="term" value="P:positive regulation of t-SNARE clustering"/>
    <property type="evidence" value="ECO:0007669"/>
    <property type="project" value="Ensembl"/>
</dbReference>
<dbReference type="GO" id="GO:0097119">
    <property type="term" value="P:postsynaptic density protein 95 clustering"/>
    <property type="evidence" value="ECO:0000314"/>
    <property type="project" value="BHF-UCL"/>
</dbReference>
<dbReference type="GO" id="GO:0097104">
    <property type="term" value="P:postsynaptic membrane assembly"/>
    <property type="evidence" value="ECO:0000314"/>
    <property type="project" value="BHF-UCL"/>
</dbReference>
<dbReference type="GO" id="GO:0098698">
    <property type="term" value="P:postsynaptic specialization assembly"/>
    <property type="evidence" value="ECO:0000314"/>
    <property type="project" value="SynGO"/>
</dbReference>
<dbReference type="GO" id="GO:0099054">
    <property type="term" value="P:presynapse assembly"/>
    <property type="evidence" value="ECO:0000314"/>
    <property type="project" value="MGI"/>
</dbReference>
<dbReference type="GO" id="GO:0097105">
    <property type="term" value="P:presynaptic membrane assembly"/>
    <property type="evidence" value="ECO:0000314"/>
    <property type="project" value="BHF-UCL"/>
</dbReference>
<dbReference type="GO" id="GO:0034394">
    <property type="term" value="P:protein localization to cell surface"/>
    <property type="evidence" value="ECO:0000314"/>
    <property type="project" value="MGI"/>
</dbReference>
<dbReference type="GO" id="GO:0035418">
    <property type="term" value="P:protein localization to synapse"/>
    <property type="evidence" value="ECO:0000314"/>
    <property type="project" value="BHF-UCL"/>
</dbReference>
<dbReference type="GO" id="GO:1905606">
    <property type="term" value="P:regulation of presynapse assembly"/>
    <property type="evidence" value="ECO:0007669"/>
    <property type="project" value="Ensembl"/>
</dbReference>
<dbReference type="GO" id="GO:0002087">
    <property type="term" value="P:regulation of respiratory gaseous exchange by nervous system process"/>
    <property type="evidence" value="ECO:0000316"/>
    <property type="project" value="MGI"/>
</dbReference>
<dbReference type="GO" id="GO:0019233">
    <property type="term" value="P:sensory perception of pain"/>
    <property type="evidence" value="ECO:0000315"/>
    <property type="project" value="BHF-UCL"/>
</dbReference>
<dbReference type="GO" id="GO:0035176">
    <property type="term" value="P:social behavior"/>
    <property type="evidence" value="ECO:0000250"/>
    <property type="project" value="BHF-UCL"/>
</dbReference>
<dbReference type="GO" id="GO:0007416">
    <property type="term" value="P:synapse assembly"/>
    <property type="evidence" value="ECO:0000250"/>
    <property type="project" value="BHF-UCL"/>
</dbReference>
<dbReference type="GO" id="GO:0050808">
    <property type="term" value="P:synapse organization"/>
    <property type="evidence" value="ECO:0000250"/>
    <property type="project" value="BHF-UCL"/>
</dbReference>
<dbReference type="GO" id="GO:0051932">
    <property type="term" value="P:synaptic transmission, GABAergic"/>
    <property type="evidence" value="ECO:0000314"/>
    <property type="project" value="MGI"/>
</dbReference>
<dbReference type="GO" id="GO:0072553">
    <property type="term" value="P:terminal button organization"/>
    <property type="evidence" value="ECO:0000250"/>
    <property type="project" value="BHF-UCL"/>
</dbReference>
<dbReference type="GO" id="GO:0001966">
    <property type="term" value="P:thigmotaxis"/>
    <property type="evidence" value="ECO:0000250"/>
    <property type="project" value="BHF-UCL"/>
</dbReference>
<dbReference type="DisProt" id="DP02755"/>
<dbReference type="FunFam" id="3.40.50.1820:FF:000001">
    <property type="entry name" value="Neuroligin 3 isoform"/>
    <property type="match status" value="1"/>
</dbReference>
<dbReference type="Gene3D" id="3.40.50.1820">
    <property type="entry name" value="alpha/beta hydrolase"/>
    <property type="match status" value="1"/>
</dbReference>
<dbReference type="InterPro" id="IPR029058">
    <property type="entry name" value="AB_hydrolase_fold"/>
</dbReference>
<dbReference type="InterPro" id="IPR002018">
    <property type="entry name" value="CarbesteraseB"/>
</dbReference>
<dbReference type="InterPro" id="IPR019819">
    <property type="entry name" value="Carboxylesterase_B_CS"/>
</dbReference>
<dbReference type="InterPro" id="IPR051093">
    <property type="entry name" value="Neuroligin/BSAL"/>
</dbReference>
<dbReference type="InterPro" id="IPR000460">
    <property type="entry name" value="Nlgn"/>
</dbReference>
<dbReference type="PANTHER" id="PTHR43903">
    <property type="entry name" value="NEUROLIGIN"/>
    <property type="match status" value="1"/>
</dbReference>
<dbReference type="Pfam" id="PF00135">
    <property type="entry name" value="COesterase"/>
    <property type="match status" value="1"/>
</dbReference>
<dbReference type="PRINTS" id="PR01090">
    <property type="entry name" value="NEUROLIGIN"/>
</dbReference>
<dbReference type="SUPFAM" id="SSF53474">
    <property type="entry name" value="alpha/beta-Hydrolases"/>
    <property type="match status" value="1"/>
</dbReference>
<dbReference type="PROSITE" id="PS00941">
    <property type="entry name" value="CARBOXYLESTERASE_B_2"/>
    <property type="match status" value="1"/>
</dbReference>
<feature type="signal peptide" evidence="1">
    <location>
        <begin position="1"/>
        <end position="14"/>
    </location>
</feature>
<feature type="chain" id="PRO_0000041879" description="Neuroligin-2">
    <location>
        <begin position="15"/>
        <end position="836"/>
    </location>
</feature>
<feature type="topological domain" description="Extracellular" evidence="4">
    <location>
        <begin position="15"/>
        <end position="678"/>
    </location>
</feature>
<feature type="transmembrane region" description="Helical" evidence="4">
    <location>
        <begin position="679"/>
        <end position="699"/>
    </location>
</feature>
<feature type="topological domain" description="Cytoplasmic" evidence="4">
    <location>
        <begin position="700"/>
        <end position="836"/>
    </location>
</feature>
<feature type="region of interest" description="Disordered" evidence="5">
    <location>
        <begin position="623"/>
        <end position="661"/>
    </location>
</feature>
<feature type="region of interest" description="Required for interaction with LHFPL4" evidence="19">
    <location>
        <begin position="679"/>
        <end position="699"/>
    </location>
</feature>
<feature type="region of interest" description="Disordered" evidence="5">
    <location>
        <begin position="711"/>
        <end position="735"/>
    </location>
</feature>
<feature type="region of interest" description="Disordered" evidence="5">
    <location>
        <begin position="791"/>
        <end position="836"/>
    </location>
</feature>
<feature type="compositionally biased region" description="Gly residues" evidence="5">
    <location>
        <begin position="717"/>
        <end position="728"/>
    </location>
</feature>
<feature type="compositionally biased region" description="Pro residues" evidence="5">
    <location>
        <begin position="796"/>
        <end position="819"/>
    </location>
</feature>
<feature type="compositionally biased region" description="Polar residues" evidence="5">
    <location>
        <begin position="824"/>
        <end position="836"/>
    </location>
</feature>
<feature type="modified residue" description="Phosphoserine" evidence="23">
    <location>
        <position position="714"/>
    </location>
</feature>
<feature type="modified residue" description="Phosphoserine" evidence="23">
    <location>
        <position position="719"/>
    </location>
</feature>
<feature type="glycosylation site" description="N-linked (GlcNAc...) asparagine" evidence="10">
    <location>
        <position position="98"/>
    </location>
</feature>
<feature type="glycosylation site" description="N-linked (GlcNAc...) asparagine" evidence="4">
    <location>
        <position position="136"/>
    </location>
</feature>
<feature type="glycosylation site" description="N-linked (GlcNAc...) asparagine" evidence="4">
    <location>
        <position position="522"/>
    </location>
</feature>
<feature type="disulfide bond" evidence="10">
    <location>
        <begin position="106"/>
        <end position="141"/>
    </location>
</feature>
<feature type="disulfide bond" evidence="10">
    <location>
        <begin position="317"/>
        <end position="328"/>
    </location>
</feature>
<feature type="disulfide bond" evidence="10">
    <location>
        <begin position="487"/>
        <end position="521"/>
    </location>
</feature>
<feature type="mutagenesis site" description="Reduced presynaptic differentiation." evidence="21">
    <original>KPRVR</original>
    <variation>APAVA</variation>
    <location>
        <begin position="586"/>
        <end position="590"/>
    </location>
</feature>
<feature type="sequence conflict" description="In Ref. 1; BAD32437." evidence="22" ref="1">
    <original>V</original>
    <variation>A</variation>
    <location>
        <position position="210"/>
    </location>
</feature>
<feature type="strand" evidence="24">
    <location>
        <begin position="59"/>
        <end position="63"/>
    </location>
</feature>
<feature type="strand" evidence="24">
    <location>
        <begin position="66"/>
        <end position="73"/>
    </location>
</feature>
<feature type="turn" evidence="24">
    <location>
        <begin position="81"/>
        <end position="84"/>
    </location>
</feature>
<feature type="strand" evidence="24">
    <location>
        <begin position="94"/>
        <end position="97"/>
    </location>
</feature>
<feature type="strand" evidence="24">
    <location>
        <begin position="110"/>
        <end position="112"/>
    </location>
</feature>
<feature type="turn" evidence="24">
    <location>
        <begin position="116"/>
        <end position="118"/>
    </location>
</feature>
<feature type="helix" evidence="24">
    <location>
        <begin position="121"/>
        <end position="125"/>
    </location>
</feature>
<feature type="helix" evidence="24">
    <location>
        <begin position="127"/>
        <end position="131"/>
    </location>
</feature>
<feature type="helix" evidence="24">
    <location>
        <begin position="132"/>
        <end position="134"/>
    </location>
</feature>
<feature type="strand" evidence="24">
    <location>
        <begin position="135"/>
        <end position="137"/>
    </location>
</feature>
<feature type="strand" evidence="24">
    <location>
        <begin position="143"/>
        <end position="149"/>
    </location>
</feature>
<feature type="strand" evidence="24">
    <location>
        <begin position="151"/>
        <end position="154"/>
    </location>
</feature>
<feature type="strand" evidence="24">
    <location>
        <begin position="177"/>
        <end position="183"/>
    </location>
</feature>
<feature type="strand" evidence="24">
    <location>
        <begin position="186"/>
        <end position="190"/>
    </location>
</feature>
<feature type="helix" evidence="24">
    <location>
        <begin position="193"/>
        <end position="195"/>
    </location>
</feature>
<feature type="helix" evidence="24">
    <location>
        <begin position="199"/>
        <end position="205"/>
    </location>
</feature>
<feature type="strand" evidence="24">
    <location>
        <begin position="207"/>
        <end position="212"/>
    </location>
</feature>
<feature type="helix" evidence="24">
    <location>
        <begin position="217"/>
        <end position="221"/>
    </location>
</feature>
<feature type="helix" evidence="24">
    <location>
        <begin position="233"/>
        <end position="248"/>
    </location>
</feature>
<feature type="helix" evidence="24">
    <location>
        <begin position="249"/>
        <end position="252"/>
    </location>
</feature>
<feature type="strand" evidence="24">
    <location>
        <begin position="254"/>
        <end position="264"/>
    </location>
</feature>
<feature type="helix" evidence="24">
    <location>
        <begin position="266"/>
        <end position="276"/>
    </location>
</feature>
<feature type="strand" evidence="24">
    <location>
        <begin position="281"/>
        <end position="283"/>
    </location>
</feature>
<feature type="strand" evidence="24">
    <location>
        <begin position="286"/>
        <end position="291"/>
    </location>
</feature>
<feature type="strand" evidence="24">
    <location>
        <begin position="294"/>
        <end position="296"/>
    </location>
</feature>
<feature type="turn" evidence="24">
    <location>
        <begin position="297"/>
        <end position="299"/>
    </location>
</feature>
<feature type="helix" evidence="24">
    <location>
        <begin position="304"/>
        <end position="315"/>
    </location>
</feature>
<feature type="helix" evidence="24">
    <location>
        <begin position="322"/>
        <end position="329"/>
    </location>
</feature>
<feature type="helix" evidence="24">
    <location>
        <begin position="334"/>
        <end position="338"/>
    </location>
</feature>
<feature type="strand" evidence="24">
    <location>
        <begin position="350"/>
        <end position="352"/>
    </location>
</feature>
<feature type="strand" evidence="24">
    <location>
        <begin position="357"/>
        <end position="360"/>
    </location>
</feature>
<feature type="helix" evidence="24">
    <location>
        <begin position="364"/>
        <end position="370"/>
    </location>
</feature>
<feature type="strand" evidence="24">
    <location>
        <begin position="377"/>
        <end position="383"/>
    </location>
</feature>
<feature type="helix" evidence="24">
    <location>
        <begin position="390"/>
        <end position="394"/>
    </location>
</feature>
<feature type="strand" evidence="24">
    <location>
        <begin position="396"/>
        <end position="400"/>
    </location>
</feature>
<feature type="helix" evidence="24">
    <location>
        <begin position="403"/>
        <end position="416"/>
    </location>
</feature>
<feature type="helix" evidence="24">
    <location>
        <begin position="424"/>
        <end position="435"/>
    </location>
</feature>
<feature type="helix" evidence="24">
    <location>
        <begin position="444"/>
        <end position="459"/>
    </location>
</feature>
<feature type="helix" evidence="24">
    <location>
        <begin position="461"/>
        <end position="473"/>
    </location>
</feature>
<feature type="strand" evidence="24">
    <location>
        <begin position="478"/>
        <end position="484"/>
    </location>
</feature>
<feature type="turn" evidence="24">
    <location>
        <begin position="500"/>
        <end position="503"/>
    </location>
</feature>
<feature type="helix" evidence="24">
    <location>
        <begin position="504"/>
        <end position="508"/>
    </location>
</feature>
<feature type="helix" evidence="24">
    <location>
        <begin position="510"/>
        <end position="513"/>
    </location>
</feature>
<feature type="strand" evidence="24">
    <location>
        <begin position="517"/>
        <end position="519"/>
    </location>
</feature>
<feature type="helix" evidence="24">
    <location>
        <begin position="525"/>
        <end position="544"/>
    </location>
</feature>
<feature type="strand" evidence="24">
    <location>
        <begin position="549"/>
        <end position="551"/>
    </location>
</feature>
<feature type="helix" evidence="24">
    <location>
        <begin position="564"/>
        <end position="566"/>
    </location>
</feature>
<feature type="strand" evidence="24">
    <location>
        <begin position="575"/>
        <end position="577"/>
    </location>
</feature>
<feature type="strand" evidence="24">
    <location>
        <begin position="579"/>
        <end position="586"/>
    </location>
</feature>
<feature type="strand" evidence="24">
    <location>
        <begin position="589"/>
        <end position="592"/>
    </location>
</feature>
<feature type="helix" evidence="24">
    <location>
        <begin position="595"/>
        <end position="602"/>
    </location>
</feature>
<feature type="turn" evidence="24">
    <location>
        <begin position="603"/>
        <end position="605"/>
    </location>
</feature>
<feature type="helix" evidence="24">
    <location>
        <begin position="606"/>
        <end position="608"/>
    </location>
</feature>
<gene>
    <name type="primary">Nlgn2</name>
    <name type="synonym">Kiaa1366</name>
</gene>